<accession>Q3STT1</accession>
<name>MRAY_NITWN</name>
<evidence type="ECO:0000255" key="1">
    <source>
        <dbReference type="HAMAP-Rule" id="MF_00038"/>
    </source>
</evidence>
<gene>
    <name evidence="1" type="primary">mraY</name>
    <name type="ordered locus">Nwi_1048</name>
</gene>
<dbReference type="EC" id="2.7.8.13" evidence="1"/>
<dbReference type="EMBL" id="CP000115">
    <property type="protein sequence ID" value="ABA04310.1"/>
    <property type="molecule type" value="Genomic_DNA"/>
</dbReference>
<dbReference type="RefSeq" id="WP_011314344.1">
    <property type="nucleotide sequence ID" value="NC_007406.1"/>
</dbReference>
<dbReference type="SMR" id="Q3STT1"/>
<dbReference type="STRING" id="323098.Nwi_1048"/>
<dbReference type="KEGG" id="nwi:Nwi_1048"/>
<dbReference type="eggNOG" id="COG0472">
    <property type="taxonomic scope" value="Bacteria"/>
</dbReference>
<dbReference type="HOGENOM" id="CLU_023982_0_0_5"/>
<dbReference type="OrthoDB" id="9805475at2"/>
<dbReference type="UniPathway" id="UPA00219"/>
<dbReference type="Proteomes" id="UP000002531">
    <property type="component" value="Chromosome"/>
</dbReference>
<dbReference type="GO" id="GO:0005886">
    <property type="term" value="C:plasma membrane"/>
    <property type="evidence" value="ECO:0007669"/>
    <property type="project" value="UniProtKB-SubCell"/>
</dbReference>
<dbReference type="GO" id="GO:0046872">
    <property type="term" value="F:metal ion binding"/>
    <property type="evidence" value="ECO:0007669"/>
    <property type="project" value="UniProtKB-KW"/>
</dbReference>
<dbReference type="GO" id="GO:0008963">
    <property type="term" value="F:phospho-N-acetylmuramoyl-pentapeptide-transferase activity"/>
    <property type="evidence" value="ECO:0007669"/>
    <property type="project" value="UniProtKB-UniRule"/>
</dbReference>
<dbReference type="GO" id="GO:0051992">
    <property type="term" value="F:UDP-N-acetylmuramoyl-L-alanyl-D-glutamyl-meso-2,6-diaminopimelyl-D-alanyl-D-alanine:undecaprenyl-phosphate transferase activity"/>
    <property type="evidence" value="ECO:0007669"/>
    <property type="project" value="RHEA"/>
</dbReference>
<dbReference type="GO" id="GO:0051301">
    <property type="term" value="P:cell division"/>
    <property type="evidence" value="ECO:0007669"/>
    <property type="project" value="UniProtKB-KW"/>
</dbReference>
<dbReference type="GO" id="GO:0071555">
    <property type="term" value="P:cell wall organization"/>
    <property type="evidence" value="ECO:0007669"/>
    <property type="project" value="UniProtKB-KW"/>
</dbReference>
<dbReference type="GO" id="GO:0009252">
    <property type="term" value="P:peptidoglycan biosynthetic process"/>
    <property type="evidence" value="ECO:0007669"/>
    <property type="project" value="UniProtKB-UniRule"/>
</dbReference>
<dbReference type="GO" id="GO:0008360">
    <property type="term" value="P:regulation of cell shape"/>
    <property type="evidence" value="ECO:0007669"/>
    <property type="project" value="UniProtKB-KW"/>
</dbReference>
<dbReference type="CDD" id="cd06852">
    <property type="entry name" value="GT_MraY"/>
    <property type="match status" value="1"/>
</dbReference>
<dbReference type="HAMAP" id="MF_00038">
    <property type="entry name" value="MraY"/>
    <property type="match status" value="1"/>
</dbReference>
<dbReference type="InterPro" id="IPR000715">
    <property type="entry name" value="Glycosyl_transferase_4"/>
</dbReference>
<dbReference type="InterPro" id="IPR003524">
    <property type="entry name" value="PNAcMuramoyl-5peptid_Trfase"/>
</dbReference>
<dbReference type="InterPro" id="IPR018480">
    <property type="entry name" value="PNAcMuramoyl-5peptid_Trfase_CS"/>
</dbReference>
<dbReference type="NCBIfam" id="TIGR00445">
    <property type="entry name" value="mraY"/>
    <property type="match status" value="1"/>
</dbReference>
<dbReference type="PANTHER" id="PTHR22926">
    <property type="entry name" value="PHOSPHO-N-ACETYLMURAMOYL-PENTAPEPTIDE-TRANSFERASE"/>
    <property type="match status" value="1"/>
</dbReference>
<dbReference type="PANTHER" id="PTHR22926:SF5">
    <property type="entry name" value="PHOSPHO-N-ACETYLMURAMOYL-PENTAPEPTIDE-TRANSFERASE HOMOLOG"/>
    <property type="match status" value="1"/>
</dbReference>
<dbReference type="Pfam" id="PF00953">
    <property type="entry name" value="Glycos_transf_4"/>
    <property type="match status" value="1"/>
</dbReference>
<dbReference type="Pfam" id="PF10555">
    <property type="entry name" value="MraY_sig1"/>
    <property type="match status" value="1"/>
</dbReference>
<dbReference type="PROSITE" id="PS01347">
    <property type="entry name" value="MRAY_1"/>
    <property type="match status" value="1"/>
</dbReference>
<dbReference type="PROSITE" id="PS01348">
    <property type="entry name" value="MRAY_2"/>
    <property type="match status" value="1"/>
</dbReference>
<feature type="chain" id="PRO_0000235459" description="Phospho-N-acetylmuramoyl-pentapeptide-transferase">
    <location>
        <begin position="1"/>
        <end position="368"/>
    </location>
</feature>
<feature type="transmembrane region" description="Helical" evidence="1">
    <location>
        <begin position="32"/>
        <end position="52"/>
    </location>
</feature>
<feature type="transmembrane region" description="Helical" evidence="1">
    <location>
        <begin position="79"/>
        <end position="99"/>
    </location>
</feature>
<feature type="transmembrane region" description="Helical" evidence="1">
    <location>
        <begin position="102"/>
        <end position="122"/>
    </location>
</feature>
<feature type="transmembrane region" description="Helical" evidence="1">
    <location>
        <begin position="142"/>
        <end position="160"/>
    </location>
</feature>
<feature type="transmembrane region" description="Helical" evidence="1">
    <location>
        <begin position="176"/>
        <end position="196"/>
    </location>
</feature>
<feature type="transmembrane region" description="Helical" evidence="1">
    <location>
        <begin position="207"/>
        <end position="227"/>
    </location>
</feature>
<feature type="transmembrane region" description="Helical" evidence="1">
    <location>
        <begin position="244"/>
        <end position="264"/>
    </location>
</feature>
<feature type="transmembrane region" description="Helical" evidence="1">
    <location>
        <begin position="271"/>
        <end position="291"/>
    </location>
</feature>
<feature type="transmembrane region" description="Helical" evidence="1">
    <location>
        <begin position="296"/>
        <end position="316"/>
    </location>
</feature>
<feature type="transmembrane region" description="Helical" evidence="1">
    <location>
        <begin position="345"/>
        <end position="365"/>
    </location>
</feature>
<sequence length="368" mass="39451">MFYWLIDLSNTVPGLGIFKPLLNVFRYITFRTGGAVVTGALFVFLFGPWIIDNLRLRQGKGQPIRADGPQSHLVSKKGTPTMGGLMILSGLVVSTVLWANPLNPYVWIVLAVTLGFGLIGFYDDYLKVTKQTHAGFSGRTRLLLELLIALAACYALTRLGREPFSTALVIPFFKDVALDLGWFFLGFGAFIIVGAGNAVNLTDGLDGLAIVPVMIAAASFAMIAYLAGNAVFADYLQINYIAGAGELAVLCGAVLGAGLGFLWFNAPPASIFMGDTGSLALGGMLGSIAVAVKHEIVLAVIGGLFVLEAVSVIVQVASFKLTGKRIFKMAPIHHHFEQLGWTEPQIVIRFWIISVMLALAGLSTLKLR</sequence>
<reference key="1">
    <citation type="journal article" date="2006" name="Appl. Environ. Microbiol.">
        <title>Genome sequence of the chemolithoautotrophic nitrite-oxidizing bacterium Nitrobacter winogradskyi Nb-255.</title>
        <authorList>
            <person name="Starkenburg S.R."/>
            <person name="Chain P.S.G."/>
            <person name="Sayavedra-Soto L.A."/>
            <person name="Hauser L."/>
            <person name="Land M.L."/>
            <person name="Larimer F.W."/>
            <person name="Malfatti S.A."/>
            <person name="Klotz M.G."/>
            <person name="Bottomley P.J."/>
            <person name="Arp D.J."/>
            <person name="Hickey W.J."/>
        </authorList>
    </citation>
    <scope>NUCLEOTIDE SEQUENCE [LARGE SCALE GENOMIC DNA]</scope>
    <source>
        <strain>ATCC 25391 / DSM 10237 / CIP 104748 / NCIMB 11846 / Nb-255</strain>
    </source>
</reference>
<proteinExistence type="inferred from homology"/>
<keyword id="KW-0131">Cell cycle</keyword>
<keyword id="KW-0132">Cell division</keyword>
<keyword id="KW-0997">Cell inner membrane</keyword>
<keyword id="KW-1003">Cell membrane</keyword>
<keyword id="KW-0133">Cell shape</keyword>
<keyword id="KW-0961">Cell wall biogenesis/degradation</keyword>
<keyword id="KW-0460">Magnesium</keyword>
<keyword id="KW-0472">Membrane</keyword>
<keyword id="KW-0479">Metal-binding</keyword>
<keyword id="KW-0573">Peptidoglycan synthesis</keyword>
<keyword id="KW-1185">Reference proteome</keyword>
<keyword id="KW-0808">Transferase</keyword>
<keyword id="KW-0812">Transmembrane</keyword>
<keyword id="KW-1133">Transmembrane helix</keyword>
<protein>
    <recommendedName>
        <fullName evidence="1">Phospho-N-acetylmuramoyl-pentapeptide-transferase</fullName>
        <ecNumber evidence="1">2.7.8.13</ecNumber>
    </recommendedName>
    <alternativeName>
        <fullName evidence="1">UDP-MurNAc-pentapeptide phosphotransferase</fullName>
    </alternativeName>
</protein>
<organism>
    <name type="scientific">Nitrobacter winogradskyi (strain ATCC 25391 / DSM 10237 / CIP 104748 / NCIMB 11846 / Nb-255)</name>
    <dbReference type="NCBI Taxonomy" id="323098"/>
    <lineage>
        <taxon>Bacteria</taxon>
        <taxon>Pseudomonadati</taxon>
        <taxon>Pseudomonadota</taxon>
        <taxon>Alphaproteobacteria</taxon>
        <taxon>Hyphomicrobiales</taxon>
        <taxon>Nitrobacteraceae</taxon>
        <taxon>Nitrobacter</taxon>
    </lineage>
</organism>
<comment type="function">
    <text evidence="1">Catalyzes the initial step of the lipid cycle reactions in the biosynthesis of the cell wall peptidoglycan: transfers peptidoglycan precursor phospho-MurNAc-pentapeptide from UDP-MurNAc-pentapeptide onto the lipid carrier undecaprenyl phosphate, yielding undecaprenyl-pyrophosphoryl-MurNAc-pentapeptide, known as lipid I.</text>
</comment>
<comment type="catalytic activity">
    <reaction evidence="1">
        <text>UDP-N-acetyl-alpha-D-muramoyl-L-alanyl-gamma-D-glutamyl-meso-2,6-diaminopimeloyl-D-alanyl-D-alanine + di-trans,octa-cis-undecaprenyl phosphate = di-trans,octa-cis-undecaprenyl diphospho-N-acetyl-alpha-D-muramoyl-L-alanyl-D-glutamyl-meso-2,6-diaminopimeloyl-D-alanyl-D-alanine + UMP</text>
        <dbReference type="Rhea" id="RHEA:28386"/>
        <dbReference type="ChEBI" id="CHEBI:57865"/>
        <dbReference type="ChEBI" id="CHEBI:60392"/>
        <dbReference type="ChEBI" id="CHEBI:61386"/>
        <dbReference type="ChEBI" id="CHEBI:61387"/>
        <dbReference type="EC" id="2.7.8.13"/>
    </reaction>
</comment>
<comment type="cofactor">
    <cofactor evidence="1">
        <name>Mg(2+)</name>
        <dbReference type="ChEBI" id="CHEBI:18420"/>
    </cofactor>
</comment>
<comment type="pathway">
    <text evidence="1">Cell wall biogenesis; peptidoglycan biosynthesis.</text>
</comment>
<comment type="subcellular location">
    <subcellularLocation>
        <location evidence="1">Cell inner membrane</location>
        <topology evidence="1">Multi-pass membrane protein</topology>
    </subcellularLocation>
</comment>
<comment type="similarity">
    <text evidence="1">Belongs to the glycosyltransferase 4 family. MraY subfamily.</text>
</comment>